<gene>
    <name type="primary">sbnA</name>
    <name type="ordered locus">SAUSA300_0118</name>
</gene>
<accession>Q2FKE3</accession>
<name>SBNA_STAA3</name>
<comment type="function">
    <text evidence="1">Catalyzes the synthesis of N-((2S)-2-amino-2-carboxyethyl)-L-glutamate (ACEGA) from O-phospho-L-serine and L-glutamate. Involved in the biosynthesis of L-2,3-diaminopropionic acid (L-Dap), a precursor of staphyloferrin B and antibiotics.</text>
</comment>
<comment type="catalytic activity">
    <reaction evidence="1">
        <text>O-phospho-L-serine + L-glutamate = N-[(2S)-2-amino-2-carboxyethyl]-L-glutamate + phosphate + H(+)</text>
        <dbReference type="Rhea" id="RHEA:52384"/>
        <dbReference type="ChEBI" id="CHEBI:15378"/>
        <dbReference type="ChEBI" id="CHEBI:29985"/>
        <dbReference type="ChEBI" id="CHEBI:43474"/>
        <dbReference type="ChEBI" id="CHEBI:57524"/>
        <dbReference type="ChEBI" id="CHEBI:134610"/>
        <dbReference type="EC" id="2.5.1.140"/>
    </reaction>
</comment>
<comment type="cofactor">
    <cofactor evidence="1">
        <name>pyridoxal 5'-phosphate</name>
        <dbReference type="ChEBI" id="CHEBI:597326"/>
    </cofactor>
</comment>
<comment type="pathway">
    <text evidence="1">Siderophore biosynthesis.</text>
</comment>
<comment type="subunit">
    <text evidence="1">Homodimer.</text>
</comment>
<comment type="induction">
    <text evidence="2">Up-regulated under iron-deficient growth conditions. Repressed by Fur under iron-rich growth conditions.</text>
</comment>
<comment type="similarity">
    <text evidence="3">Belongs to the cysteine synthase/cystathionine beta-synthase family. SbnA subfamily.</text>
</comment>
<comment type="sequence caution" evidence="3">
    <conflict type="erroneous initiation">
        <sequence resource="EMBL-CDS" id="ABD22493"/>
    </conflict>
    <text>Truncated N-terminus.</text>
</comment>
<keyword id="KW-0663">Pyridoxal phosphate</keyword>
<keyword id="KW-0808">Transferase</keyword>
<feature type="chain" id="PRO_0000395027" description="N-(2-amino-2-carboxyethyl)-L-glutamate synthase">
    <location>
        <begin position="1"/>
        <end position="326"/>
    </location>
</feature>
<feature type="binding site" evidence="1">
    <location>
        <position position="77"/>
    </location>
    <ligand>
        <name>pyridoxal 5'-phosphate</name>
        <dbReference type="ChEBI" id="CHEBI:597326"/>
    </ligand>
</feature>
<feature type="binding site" evidence="1">
    <location>
        <begin position="185"/>
        <end position="189"/>
    </location>
    <ligand>
        <name>pyridoxal 5'-phosphate</name>
        <dbReference type="ChEBI" id="CHEBI:597326"/>
    </ligand>
</feature>
<feature type="binding site" evidence="1">
    <location>
        <position position="272"/>
    </location>
    <ligand>
        <name>pyridoxal 5'-phosphate</name>
        <dbReference type="ChEBI" id="CHEBI:597326"/>
    </ligand>
</feature>
<feature type="modified residue" description="N6-(pyridoxal phosphate)lysine" evidence="1">
    <location>
        <position position="47"/>
    </location>
</feature>
<dbReference type="EC" id="2.5.1.140" evidence="1"/>
<dbReference type="EMBL" id="CP000255">
    <property type="protein sequence ID" value="ABD22493.1"/>
    <property type="status" value="ALT_INIT"/>
    <property type="molecule type" value="Genomic_DNA"/>
</dbReference>
<dbReference type="RefSeq" id="WP_000570808.1">
    <property type="nucleotide sequence ID" value="NZ_CP027476.1"/>
</dbReference>
<dbReference type="SMR" id="Q2FKE3"/>
<dbReference type="KEGG" id="saa:SAUSA300_0118"/>
<dbReference type="HOGENOM" id="CLU_021018_1_0_9"/>
<dbReference type="OMA" id="PGSWCPD"/>
<dbReference type="Proteomes" id="UP000001939">
    <property type="component" value="Chromosome"/>
</dbReference>
<dbReference type="GO" id="GO:0016765">
    <property type="term" value="F:transferase activity, transferring alkyl or aryl (other than methyl) groups"/>
    <property type="evidence" value="ECO:0007669"/>
    <property type="project" value="UniProtKB-ARBA"/>
</dbReference>
<dbReference type="GO" id="GO:0006535">
    <property type="term" value="P:cysteine biosynthetic process from serine"/>
    <property type="evidence" value="ECO:0007669"/>
    <property type="project" value="InterPro"/>
</dbReference>
<dbReference type="CDD" id="cd01561">
    <property type="entry name" value="CBS_like"/>
    <property type="match status" value="1"/>
</dbReference>
<dbReference type="Gene3D" id="3.40.50.1100">
    <property type="match status" value="2"/>
</dbReference>
<dbReference type="InterPro" id="IPR050214">
    <property type="entry name" value="Cys_Synth/Cystath_Beta-Synth"/>
</dbReference>
<dbReference type="InterPro" id="IPR001216">
    <property type="entry name" value="P-phosphate_BS"/>
</dbReference>
<dbReference type="InterPro" id="IPR023927">
    <property type="entry name" value="SbnA"/>
</dbReference>
<dbReference type="InterPro" id="IPR001926">
    <property type="entry name" value="TrpB-like_PALP"/>
</dbReference>
<dbReference type="InterPro" id="IPR036052">
    <property type="entry name" value="TrpB-like_PALP_sf"/>
</dbReference>
<dbReference type="NCBIfam" id="TIGR03945">
    <property type="entry name" value="PLP_SbnA_fam"/>
    <property type="match status" value="1"/>
</dbReference>
<dbReference type="PANTHER" id="PTHR10314">
    <property type="entry name" value="CYSTATHIONINE BETA-SYNTHASE"/>
    <property type="match status" value="1"/>
</dbReference>
<dbReference type="Pfam" id="PF00291">
    <property type="entry name" value="PALP"/>
    <property type="match status" value="1"/>
</dbReference>
<dbReference type="SUPFAM" id="SSF53686">
    <property type="entry name" value="Tryptophan synthase beta subunit-like PLP-dependent enzymes"/>
    <property type="match status" value="1"/>
</dbReference>
<dbReference type="PROSITE" id="PS00901">
    <property type="entry name" value="CYS_SYNTHASE"/>
    <property type="match status" value="1"/>
</dbReference>
<evidence type="ECO:0000250" key="1">
    <source>
        <dbReference type="UniProtKB" id="A6QDA0"/>
    </source>
</evidence>
<evidence type="ECO:0000250" key="2">
    <source>
        <dbReference type="UniProtKB" id="Q2G1N3"/>
    </source>
</evidence>
<evidence type="ECO:0000305" key="3"/>
<protein>
    <recommendedName>
        <fullName evidence="3">N-(2-amino-2-carboxyethyl)-L-glutamate synthase</fullName>
        <shortName evidence="3">ACEGA synthase</shortName>
        <ecNumber evidence="1">2.5.1.140</ecNumber>
    </recommendedName>
</protein>
<proteinExistence type="inferred from homology"/>
<organism>
    <name type="scientific">Staphylococcus aureus (strain USA300)</name>
    <dbReference type="NCBI Taxonomy" id="367830"/>
    <lineage>
        <taxon>Bacteria</taxon>
        <taxon>Bacillati</taxon>
        <taxon>Bacillota</taxon>
        <taxon>Bacilli</taxon>
        <taxon>Bacillales</taxon>
        <taxon>Staphylococcaceae</taxon>
        <taxon>Staphylococcus</taxon>
    </lineage>
</organism>
<sequence length="326" mass="35897">MIEKSQACHDSLLDSVGQTPMVQLHQLFPKHEVFAKLEYMNPGGSMKDRPAKYIIEHGIKHGLITENTHLIESTSGNLGIALAMIAKIKGLKLTCVVDPKISPTNLKIIKSYGANVEMVEEPDAHGGYLMTRIAKVQELLATIDDAYWINQYANELNWQSHYHGAGTEIVETIKQPIDYFVAPVSTTGSIMGMSRKIKEVHPNAQIVAVDAKGSVIFGDKPINRELPGIGASRVPEILNRSEINQVIHVDDYQSALGCRKLIDYEGIFAGGSTGSIIAAIEQLITSIEEGATIVTILPDRGDRYLDLVYSDTWLEKMKSRQGVKSE</sequence>
<reference key="1">
    <citation type="journal article" date="2006" name="Lancet">
        <title>Complete genome sequence of USA300, an epidemic clone of community-acquired meticillin-resistant Staphylococcus aureus.</title>
        <authorList>
            <person name="Diep B.A."/>
            <person name="Gill S.R."/>
            <person name="Chang R.F."/>
            <person name="Phan T.H."/>
            <person name="Chen J.H."/>
            <person name="Davidson M.G."/>
            <person name="Lin F."/>
            <person name="Lin J."/>
            <person name="Carleton H.A."/>
            <person name="Mongodin E.F."/>
            <person name="Sensabaugh G.F."/>
            <person name="Perdreau-Remington F."/>
        </authorList>
    </citation>
    <scope>NUCLEOTIDE SEQUENCE [LARGE SCALE GENOMIC DNA]</scope>
    <source>
        <strain>USA300</strain>
    </source>
</reference>